<proteinExistence type="inferred from homology"/>
<dbReference type="EMBL" id="BA000031">
    <property type="protein sequence ID" value="BAC59574.1"/>
    <property type="status" value="ALT_INIT"/>
    <property type="molecule type" value="Genomic_DNA"/>
</dbReference>
<dbReference type="RefSeq" id="NP_797690.1">
    <property type="nucleotide sequence ID" value="NC_004603.1"/>
</dbReference>
<dbReference type="RefSeq" id="WP_005454796.1">
    <property type="nucleotide sequence ID" value="NC_004603.1"/>
</dbReference>
<dbReference type="SMR" id="Q87Q39"/>
<dbReference type="GeneID" id="1188816"/>
<dbReference type="KEGG" id="vpa:VP1311"/>
<dbReference type="PATRIC" id="fig|223926.6.peg.1253"/>
<dbReference type="eggNOG" id="COG4139">
    <property type="taxonomic scope" value="Bacteria"/>
</dbReference>
<dbReference type="HOGENOM" id="CLU_013016_0_3_6"/>
<dbReference type="Proteomes" id="UP000002493">
    <property type="component" value="Chromosome 1"/>
</dbReference>
<dbReference type="GO" id="GO:0005886">
    <property type="term" value="C:plasma membrane"/>
    <property type="evidence" value="ECO:0007669"/>
    <property type="project" value="UniProtKB-SubCell"/>
</dbReference>
<dbReference type="GO" id="GO:0090482">
    <property type="term" value="F:vitamin transmembrane transporter activity"/>
    <property type="evidence" value="ECO:0007669"/>
    <property type="project" value="UniProtKB-UniRule"/>
</dbReference>
<dbReference type="GO" id="GO:0015889">
    <property type="term" value="P:cobalamin transport"/>
    <property type="evidence" value="ECO:0007669"/>
    <property type="project" value="UniProtKB-UniRule"/>
</dbReference>
<dbReference type="CDD" id="cd06550">
    <property type="entry name" value="TM_ABC_iron-siderophores_like"/>
    <property type="match status" value="1"/>
</dbReference>
<dbReference type="FunFam" id="1.10.3470.10:FF:000001">
    <property type="entry name" value="Vitamin B12 ABC transporter permease BtuC"/>
    <property type="match status" value="1"/>
</dbReference>
<dbReference type="Gene3D" id="1.10.3470.10">
    <property type="entry name" value="ABC transporter involved in vitamin B12 uptake, BtuC"/>
    <property type="match status" value="1"/>
</dbReference>
<dbReference type="HAMAP" id="MF_01004">
    <property type="entry name" value="BtuC"/>
    <property type="match status" value="1"/>
</dbReference>
<dbReference type="InterPro" id="IPR037294">
    <property type="entry name" value="ABC_BtuC-like"/>
</dbReference>
<dbReference type="InterPro" id="IPR023691">
    <property type="entry name" value="ABC_transptr_BtuC"/>
</dbReference>
<dbReference type="InterPro" id="IPR000522">
    <property type="entry name" value="ABC_transptr_permease_BtuC"/>
</dbReference>
<dbReference type="NCBIfam" id="NF003001">
    <property type="entry name" value="PRK03784.1"/>
    <property type="match status" value="1"/>
</dbReference>
<dbReference type="PANTHER" id="PTHR30472">
    <property type="entry name" value="FERRIC ENTEROBACTIN TRANSPORT SYSTEM PERMEASE PROTEIN"/>
    <property type="match status" value="1"/>
</dbReference>
<dbReference type="PANTHER" id="PTHR30472:SF29">
    <property type="entry name" value="VITAMIN B12 IMPORT SYSTEM PERMEASE PROTEIN BTUC"/>
    <property type="match status" value="1"/>
</dbReference>
<dbReference type="Pfam" id="PF01032">
    <property type="entry name" value="FecCD"/>
    <property type="match status" value="1"/>
</dbReference>
<dbReference type="SUPFAM" id="SSF81345">
    <property type="entry name" value="ABC transporter involved in vitamin B12 uptake, BtuC"/>
    <property type="match status" value="1"/>
</dbReference>
<protein>
    <recommendedName>
        <fullName evidence="1">Vitamin B12 import system permease protein BtuC</fullName>
    </recommendedName>
</protein>
<evidence type="ECO:0000255" key="1">
    <source>
        <dbReference type="HAMAP-Rule" id="MF_01004"/>
    </source>
</evidence>
<evidence type="ECO:0000305" key="2"/>
<name>BTUC_VIBPA</name>
<reference key="1">
    <citation type="journal article" date="2003" name="Lancet">
        <title>Genome sequence of Vibrio parahaemolyticus: a pathogenic mechanism distinct from that of V. cholerae.</title>
        <authorList>
            <person name="Makino K."/>
            <person name="Oshima K."/>
            <person name="Kurokawa K."/>
            <person name="Yokoyama K."/>
            <person name="Uda T."/>
            <person name="Tagomori K."/>
            <person name="Iijima Y."/>
            <person name="Najima M."/>
            <person name="Nakano M."/>
            <person name="Yamashita A."/>
            <person name="Kubota Y."/>
            <person name="Kimura S."/>
            <person name="Yasunaga T."/>
            <person name="Honda T."/>
            <person name="Shinagawa H."/>
            <person name="Hattori M."/>
            <person name="Iida T."/>
        </authorList>
    </citation>
    <scope>NUCLEOTIDE SEQUENCE [LARGE SCALE GENOMIC DNA]</scope>
    <source>
        <strain>RIMD 2210633</strain>
    </source>
</reference>
<comment type="function">
    <text evidence="1">Part of the ABC transporter complex BtuCDF involved in vitamin B12 import. Involved in the translocation of the substrate across the membrane.</text>
</comment>
<comment type="subunit">
    <text evidence="1">The complex is composed of two ATP-binding proteins (BtuD), two transmembrane proteins (BtuC) and a solute-binding protein (BtuF).</text>
</comment>
<comment type="subcellular location">
    <subcellularLocation>
        <location evidence="1">Cell inner membrane</location>
        <topology evidence="1">Multi-pass membrane protein</topology>
    </subcellularLocation>
</comment>
<comment type="similarity">
    <text evidence="1">Belongs to the binding-protein-dependent transport system permease family. FecCD subfamily.</text>
</comment>
<comment type="sequence caution" evidence="2">
    <conflict type="erroneous initiation">
        <sequence resource="EMBL-CDS" id="BAC59574"/>
    </conflict>
</comment>
<organism>
    <name type="scientific">Vibrio parahaemolyticus serotype O3:K6 (strain RIMD 2210633)</name>
    <dbReference type="NCBI Taxonomy" id="223926"/>
    <lineage>
        <taxon>Bacteria</taxon>
        <taxon>Pseudomonadati</taxon>
        <taxon>Pseudomonadota</taxon>
        <taxon>Gammaproteobacteria</taxon>
        <taxon>Vibrionales</taxon>
        <taxon>Vibrionaceae</taxon>
        <taxon>Vibrio</taxon>
    </lineage>
</organism>
<feature type="chain" id="PRO_0000059980" description="Vitamin B12 import system permease protein BtuC">
    <location>
        <begin position="1"/>
        <end position="331"/>
    </location>
</feature>
<feature type="transmembrane region" description="Helical" evidence="1">
    <location>
        <begin position="20"/>
        <end position="42"/>
    </location>
</feature>
<feature type="transmembrane region" description="Helical" evidence="1">
    <location>
        <begin position="62"/>
        <end position="84"/>
    </location>
</feature>
<feature type="transmembrane region" description="Helical" evidence="1">
    <location>
        <begin position="91"/>
        <end position="113"/>
    </location>
</feature>
<feature type="transmembrane region" description="Helical" evidence="1">
    <location>
        <begin position="118"/>
        <end position="140"/>
    </location>
</feature>
<feature type="transmembrane region" description="Helical" evidence="1">
    <location>
        <begin position="147"/>
        <end position="169"/>
    </location>
</feature>
<feature type="transmembrane region" description="Helical" evidence="1">
    <location>
        <begin position="189"/>
        <end position="208"/>
    </location>
</feature>
<feature type="transmembrane region" description="Helical" evidence="1">
    <location>
        <begin position="240"/>
        <end position="262"/>
    </location>
</feature>
<feature type="transmembrane region" description="Helical" evidence="1">
    <location>
        <begin position="277"/>
        <end position="299"/>
    </location>
</feature>
<feature type="transmembrane region" description="Helical" evidence="1">
    <location>
        <begin position="306"/>
        <end position="325"/>
    </location>
</feature>
<keyword id="KW-0997">Cell inner membrane</keyword>
<keyword id="KW-1003">Cell membrane</keyword>
<keyword id="KW-0472">Membrane</keyword>
<keyword id="KW-0812">Transmembrane</keyword>
<keyword id="KW-1133">Transmembrane helix</keyword>
<keyword id="KW-0813">Transport</keyword>
<gene>
    <name evidence="1" type="primary">btuC</name>
    <name type="ordered locus">VP1311</name>
</gene>
<accession>Q87Q39</accession>
<sequence>MDFQQLILNKERRWQRNLVIMSVVLVLLSTIHLMVGEVFLSPFQSLSVFEQKLLLDLRLPRLVAAAMIGAALAVSGATLQVLLGNVLAEPGVLGISGGASLAMVLVMFALPVLPTPMIFMLAAIAGSMLFTLILVGIARAMHLTTARLLLVGVALGILSSAIVTWAFYFSDDLSLRQLMYWLMGSIGGASWYQHTVTLVMLPVLVWLCCQGKPLDKLMLGEIHATQLGVDVHQMRWKLILAISVLVGCSVALGGIISFVGLVVPHLLRLAFGTENRYLLPLSAIFGAALLVFADIGARLLLDSAELPLGVMTTSIGAPIFIWMLVKSHDAR</sequence>